<feature type="chain" id="PRO_0000367704" description="Glutamate--tRNA ligase 2">
    <location>
        <begin position="1"/>
        <end position="479"/>
    </location>
</feature>
<feature type="short sequence motif" description="'HIGH' region" evidence="1">
    <location>
        <begin position="18"/>
        <end position="28"/>
    </location>
</feature>
<feature type="short sequence motif" description="'KMSKS' region" evidence="1">
    <location>
        <begin position="244"/>
        <end position="248"/>
    </location>
</feature>
<feature type="binding site" evidence="1">
    <location>
        <position position="247"/>
    </location>
    <ligand>
        <name>ATP</name>
        <dbReference type="ChEBI" id="CHEBI:30616"/>
    </ligand>
</feature>
<gene>
    <name evidence="1" type="primary">gltX2</name>
    <name type="ordered locus">Mmar10_1396</name>
</gene>
<comment type="function">
    <text evidence="1">Catalyzes the attachment of glutamate to tRNA(Glu) in a two-step reaction: glutamate is first activated by ATP to form Glu-AMP and then transferred to the acceptor end of tRNA(Glu).</text>
</comment>
<comment type="catalytic activity">
    <reaction evidence="1">
        <text>tRNA(Glu) + L-glutamate + ATP = L-glutamyl-tRNA(Glu) + AMP + diphosphate</text>
        <dbReference type="Rhea" id="RHEA:23540"/>
        <dbReference type="Rhea" id="RHEA-COMP:9663"/>
        <dbReference type="Rhea" id="RHEA-COMP:9680"/>
        <dbReference type="ChEBI" id="CHEBI:29985"/>
        <dbReference type="ChEBI" id="CHEBI:30616"/>
        <dbReference type="ChEBI" id="CHEBI:33019"/>
        <dbReference type="ChEBI" id="CHEBI:78442"/>
        <dbReference type="ChEBI" id="CHEBI:78520"/>
        <dbReference type="ChEBI" id="CHEBI:456215"/>
        <dbReference type="EC" id="6.1.1.17"/>
    </reaction>
</comment>
<comment type="subunit">
    <text evidence="1">Monomer.</text>
</comment>
<comment type="subcellular location">
    <subcellularLocation>
        <location evidence="1">Cytoplasm</location>
    </subcellularLocation>
</comment>
<comment type="similarity">
    <text evidence="1">Belongs to the class-I aminoacyl-tRNA synthetase family. Glutamate--tRNA ligase type 1 subfamily.</text>
</comment>
<evidence type="ECO:0000255" key="1">
    <source>
        <dbReference type="HAMAP-Rule" id="MF_00022"/>
    </source>
</evidence>
<dbReference type="EC" id="6.1.1.17" evidence="1"/>
<dbReference type="EMBL" id="CP000449">
    <property type="protein sequence ID" value="ABI65688.1"/>
    <property type="molecule type" value="Genomic_DNA"/>
</dbReference>
<dbReference type="RefSeq" id="WP_011643335.1">
    <property type="nucleotide sequence ID" value="NC_008347.1"/>
</dbReference>
<dbReference type="SMR" id="Q0APU9"/>
<dbReference type="STRING" id="394221.Mmar10_1396"/>
<dbReference type="KEGG" id="mmr:Mmar10_1396"/>
<dbReference type="eggNOG" id="COG0008">
    <property type="taxonomic scope" value="Bacteria"/>
</dbReference>
<dbReference type="HOGENOM" id="CLU_015768_6_0_5"/>
<dbReference type="OrthoDB" id="9807503at2"/>
<dbReference type="Proteomes" id="UP000001964">
    <property type="component" value="Chromosome"/>
</dbReference>
<dbReference type="GO" id="GO:0005829">
    <property type="term" value="C:cytosol"/>
    <property type="evidence" value="ECO:0007669"/>
    <property type="project" value="TreeGrafter"/>
</dbReference>
<dbReference type="GO" id="GO:0005524">
    <property type="term" value="F:ATP binding"/>
    <property type="evidence" value="ECO:0007669"/>
    <property type="project" value="UniProtKB-UniRule"/>
</dbReference>
<dbReference type="GO" id="GO:0004818">
    <property type="term" value="F:glutamate-tRNA ligase activity"/>
    <property type="evidence" value="ECO:0007669"/>
    <property type="project" value="UniProtKB-UniRule"/>
</dbReference>
<dbReference type="GO" id="GO:0000049">
    <property type="term" value="F:tRNA binding"/>
    <property type="evidence" value="ECO:0007669"/>
    <property type="project" value="InterPro"/>
</dbReference>
<dbReference type="GO" id="GO:0008270">
    <property type="term" value="F:zinc ion binding"/>
    <property type="evidence" value="ECO:0007669"/>
    <property type="project" value="InterPro"/>
</dbReference>
<dbReference type="GO" id="GO:0006424">
    <property type="term" value="P:glutamyl-tRNA aminoacylation"/>
    <property type="evidence" value="ECO:0007669"/>
    <property type="project" value="UniProtKB-UniRule"/>
</dbReference>
<dbReference type="CDD" id="cd00808">
    <property type="entry name" value="GluRS_core"/>
    <property type="match status" value="1"/>
</dbReference>
<dbReference type="FunFam" id="3.40.50.620:FF:000007">
    <property type="entry name" value="Glutamate--tRNA ligase"/>
    <property type="match status" value="1"/>
</dbReference>
<dbReference type="Gene3D" id="1.10.10.350">
    <property type="match status" value="1"/>
</dbReference>
<dbReference type="Gene3D" id="3.40.50.620">
    <property type="entry name" value="HUPs"/>
    <property type="match status" value="1"/>
</dbReference>
<dbReference type="HAMAP" id="MF_00022">
    <property type="entry name" value="Glu_tRNA_synth_type1"/>
    <property type="match status" value="1"/>
</dbReference>
<dbReference type="InterPro" id="IPR045462">
    <property type="entry name" value="aa-tRNA-synth_I_cd-bd"/>
</dbReference>
<dbReference type="InterPro" id="IPR020751">
    <property type="entry name" value="aa-tRNA-synth_I_codon-bd_sub2"/>
</dbReference>
<dbReference type="InterPro" id="IPR001412">
    <property type="entry name" value="aa-tRNA-synth_I_CS"/>
</dbReference>
<dbReference type="InterPro" id="IPR008925">
    <property type="entry name" value="aa_tRNA-synth_I_cd-bd_sf"/>
</dbReference>
<dbReference type="InterPro" id="IPR004527">
    <property type="entry name" value="Glu-tRNA-ligase_bac/mito"/>
</dbReference>
<dbReference type="InterPro" id="IPR000924">
    <property type="entry name" value="Glu/Gln-tRNA-synth"/>
</dbReference>
<dbReference type="InterPro" id="IPR020058">
    <property type="entry name" value="Glu/Gln-tRNA-synth_Ib_cat-dom"/>
</dbReference>
<dbReference type="InterPro" id="IPR049940">
    <property type="entry name" value="GluQ/Sye"/>
</dbReference>
<dbReference type="InterPro" id="IPR033910">
    <property type="entry name" value="GluRS_core"/>
</dbReference>
<dbReference type="InterPro" id="IPR014729">
    <property type="entry name" value="Rossmann-like_a/b/a_fold"/>
</dbReference>
<dbReference type="NCBIfam" id="TIGR00464">
    <property type="entry name" value="gltX_bact"/>
    <property type="match status" value="1"/>
</dbReference>
<dbReference type="PANTHER" id="PTHR43311">
    <property type="entry name" value="GLUTAMATE--TRNA LIGASE"/>
    <property type="match status" value="1"/>
</dbReference>
<dbReference type="PANTHER" id="PTHR43311:SF2">
    <property type="entry name" value="GLUTAMATE--TRNA LIGASE, MITOCHONDRIAL-RELATED"/>
    <property type="match status" value="1"/>
</dbReference>
<dbReference type="Pfam" id="PF19269">
    <property type="entry name" value="Anticodon_2"/>
    <property type="match status" value="1"/>
</dbReference>
<dbReference type="Pfam" id="PF00749">
    <property type="entry name" value="tRNA-synt_1c"/>
    <property type="match status" value="1"/>
</dbReference>
<dbReference type="PRINTS" id="PR00987">
    <property type="entry name" value="TRNASYNTHGLU"/>
</dbReference>
<dbReference type="SUPFAM" id="SSF48163">
    <property type="entry name" value="An anticodon-binding domain of class I aminoacyl-tRNA synthetases"/>
    <property type="match status" value="1"/>
</dbReference>
<dbReference type="SUPFAM" id="SSF52374">
    <property type="entry name" value="Nucleotidylyl transferase"/>
    <property type="match status" value="1"/>
</dbReference>
<dbReference type="PROSITE" id="PS00178">
    <property type="entry name" value="AA_TRNA_LIGASE_I"/>
    <property type="match status" value="1"/>
</dbReference>
<protein>
    <recommendedName>
        <fullName evidence="1">Glutamate--tRNA ligase 2</fullName>
        <ecNumber evidence="1">6.1.1.17</ecNumber>
    </recommendedName>
    <alternativeName>
        <fullName evidence="1">Glutamyl-tRNA synthetase 2</fullName>
        <shortName evidence="1">GluRS 2</shortName>
    </alternativeName>
</protein>
<sequence length="479" mass="53542">MNSQLQNNDKMIRTRFAPSPTGFLHIGGARTALFNWLLARRHGGAFLLRIEDTDRARSNPAAVEAILDGLSWMGLDWDGEPVSQFERADRHVEIAHELLARGHAFKCYCTAEETQLLRDEAFAAGRALRSPWRDRDASEARADTPFTIRFKAPDSDVVIEDAVQGQVRWAAKEFDDLILLRSDGTPTYNLAVVVDDHDMEITHIVRGDDHLVNAGRQSQIYDAMEWQRPVFAHVPLIHGQDGKKLSKRHGALGAEAYRDMGYLPEGLRNYLLRLGWSHGDQELFSDADAVAAFDLAGLNKAPARMDLDKLNHINGYHLAQASDDRLCELVTPFLDSLENRIEDINLTTARLKAAMPTLKTRAATLEELADQSYFLLRQRPIQLEGKAAKPLKDDETRQRLYRLFTHLGDLKAWNEAALSDALKQFAEAESVGFGKIGQPLRAALTGGAPAPDLALVMTFIGRDETLDRIKDQMTPATTE</sequence>
<organism>
    <name type="scientific">Maricaulis maris (strain MCS10)</name>
    <name type="common">Caulobacter maris</name>
    <dbReference type="NCBI Taxonomy" id="394221"/>
    <lineage>
        <taxon>Bacteria</taxon>
        <taxon>Pseudomonadati</taxon>
        <taxon>Pseudomonadota</taxon>
        <taxon>Alphaproteobacteria</taxon>
        <taxon>Maricaulales</taxon>
        <taxon>Maricaulaceae</taxon>
        <taxon>Maricaulis</taxon>
    </lineage>
</organism>
<name>SYE2_MARMM</name>
<proteinExistence type="inferred from homology"/>
<accession>Q0APU9</accession>
<keyword id="KW-0030">Aminoacyl-tRNA synthetase</keyword>
<keyword id="KW-0067">ATP-binding</keyword>
<keyword id="KW-0963">Cytoplasm</keyword>
<keyword id="KW-0436">Ligase</keyword>
<keyword id="KW-0547">Nucleotide-binding</keyword>
<keyword id="KW-0648">Protein biosynthesis</keyword>
<keyword id="KW-1185">Reference proteome</keyword>
<reference key="1">
    <citation type="submission" date="2006-08" db="EMBL/GenBank/DDBJ databases">
        <title>Complete sequence of Maricaulis maris MCS10.</title>
        <authorList>
            <consortium name="US DOE Joint Genome Institute"/>
            <person name="Copeland A."/>
            <person name="Lucas S."/>
            <person name="Lapidus A."/>
            <person name="Barry K."/>
            <person name="Detter J.C."/>
            <person name="Glavina del Rio T."/>
            <person name="Hammon N."/>
            <person name="Israni S."/>
            <person name="Dalin E."/>
            <person name="Tice H."/>
            <person name="Pitluck S."/>
            <person name="Saunders E."/>
            <person name="Brettin T."/>
            <person name="Bruce D."/>
            <person name="Han C."/>
            <person name="Tapia R."/>
            <person name="Gilna P."/>
            <person name="Schmutz J."/>
            <person name="Larimer F."/>
            <person name="Land M."/>
            <person name="Hauser L."/>
            <person name="Kyrpides N."/>
            <person name="Mikhailova N."/>
            <person name="Viollier P."/>
            <person name="Stephens C."/>
            <person name="Richardson P."/>
        </authorList>
    </citation>
    <scope>NUCLEOTIDE SEQUENCE [LARGE SCALE GENOMIC DNA]</scope>
    <source>
        <strain>MCS10</strain>
    </source>
</reference>